<comment type="function">
    <text evidence="2 5">Has acyl-CoA thioesterase activity towards medium and long-chain (C14 to C18) fatty acyl-CoA substrates, and probably plays a role in mitochondrial fatty acid metabolism (By similarity). Plays a role in the apoptotic process, possibly via its regulation of AKT1 activity (PubMed:19421406).</text>
</comment>
<comment type="catalytic activity">
    <reaction evidence="2">
        <text>hexadecanoyl-CoA + H2O = hexadecanoate + CoA + H(+)</text>
        <dbReference type="Rhea" id="RHEA:16645"/>
        <dbReference type="ChEBI" id="CHEBI:7896"/>
        <dbReference type="ChEBI" id="CHEBI:15377"/>
        <dbReference type="ChEBI" id="CHEBI:15378"/>
        <dbReference type="ChEBI" id="CHEBI:57287"/>
        <dbReference type="ChEBI" id="CHEBI:57379"/>
        <dbReference type="EC" id="3.1.2.2"/>
    </reaction>
    <physiologicalReaction direction="left-to-right" evidence="2">
        <dbReference type="Rhea" id="RHEA:16646"/>
    </physiologicalReaction>
</comment>
<comment type="catalytic activity">
    <reaction evidence="2">
        <text>octanoyl-CoA + H2O = octanoate + CoA + H(+)</text>
        <dbReference type="Rhea" id="RHEA:30143"/>
        <dbReference type="ChEBI" id="CHEBI:15377"/>
        <dbReference type="ChEBI" id="CHEBI:15378"/>
        <dbReference type="ChEBI" id="CHEBI:25646"/>
        <dbReference type="ChEBI" id="CHEBI:57287"/>
        <dbReference type="ChEBI" id="CHEBI:57386"/>
    </reaction>
    <physiologicalReaction direction="left-to-right" evidence="2">
        <dbReference type="Rhea" id="RHEA:30144"/>
    </physiologicalReaction>
</comment>
<comment type="catalytic activity">
    <reaction evidence="2">
        <text>decanoyl-CoA + H2O = decanoate + CoA + H(+)</text>
        <dbReference type="Rhea" id="RHEA:40059"/>
        <dbReference type="ChEBI" id="CHEBI:15377"/>
        <dbReference type="ChEBI" id="CHEBI:15378"/>
        <dbReference type="ChEBI" id="CHEBI:27689"/>
        <dbReference type="ChEBI" id="CHEBI:57287"/>
        <dbReference type="ChEBI" id="CHEBI:61430"/>
    </reaction>
    <physiologicalReaction direction="left-to-right" evidence="2">
        <dbReference type="Rhea" id="RHEA:40060"/>
    </physiologicalReaction>
</comment>
<comment type="catalytic activity">
    <reaction evidence="2">
        <text>dodecanoyl-CoA + H2O = dodecanoate + CoA + H(+)</text>
        <dbReference type="Rhea" id="RHEA:30135"/>
        <dbReference type="ChEBI" id="CHEBI:15377"/>
        <dbReference type="ChEBI" id="CHEBI:15378"/>
        <dbReference type="ChEBI" id="CHEBI:18262"/>
        <dbReference type="ChEBI" id="CHEBI:57287"/>
        <dbReference type="ChEBI" id="CHEBI:57375"/>
    </reaction>
    <physiologicalReaction direction="left-to-right" evidence="2">
        <dbReference type="Rhea" id="RHEA:30136"/>
    </physiologicalReaction>
</comment>
<comment type="catalytic activity">
    <reaction evidence="2">
        <text>tetradecanoyl-CoA + H2O = tetradecanoate + CoA + H(+)</text>
        <dbReference type="Rhea" id="RHEA:40119"/>
        <dbReference type="ChEBI" id="CHEBI:15377"/>
        <dbReference type="ChEBI" id="CHEBI:15378"/>
        <dbReference type="ChEBI" id="CHEBI:30807"/>
        <dbReference type="ChEBI" id="CHEBI:57287"/>
        <dbReference type="ChEBI" id="CHEBI:57385"/>
    </reaction>
    <physiologicalReaction direction="left-to-right" evidence="2">
        <dbReference type="Rhea" id="RHEA:40120"/>
    </physiologicalReaction>
</comment>
<comment type="catalytic activity">
    <reaction evidence="2">
        <text>(9Z)-octadecenoyl-CoA + H2O = (9Z)-octadecenoate + CoA + H(+)</text>
        <dbReference type="Rhea" id="RHEA:40139"/>
        <dbReference type="ChEBI" id="CHEBI:15377"/>
        <dbReference type="ChEBI" id="CHEBI:15378"/>
        <dbReference type="ChEBI" id="CHEBI:30823"/>
        <dbReference type="ChEBI" id="CHEBI:57287"/>
        <dbReference type="ChEBI" id="CHEBI:57387"/>
    </reaction>
    <physiologicalReaction direction="left-to-right" evidence="2">
        <dbReference type="Rhea" id="RHEA:40140"/>
    </physiologicalReaction>
</comment>
<comment type="catalytic activity">
    <reaction evidence="2">
        <text>(5Z,8Z,11Z,14Z)-eicosatetraenoyl-CoA + H2O = (5Z,8Z,11Z,14Z)-eicosatetraenoate + CoA + H(+)</text>
        <dbReference type="Rhea" id="RHEA:40151"/>
        <dbReference type="ChEBI" id="CHEBI:15377"/>
        <dbReference type="ChEBI" id="CHEBI:15378"/>
        <dbReference type="ChEBI" id="CHEBI:32395"/>
        <dbReference type="ChEBI" id="CHEBI:57287"/>
        <dbReference type="ChEBI" id="CHEBI:57368"/>
    </reaction>
    <physiologicalReaction direction="left-to-right" evidence="2">
        <dbReference type="Rhea" id="RHEA:40152"/>
    </physiologicalReaction>
</comment>
<comment type="subunit">
    <text evidence="2 4">Homodimer and homotetramer (By similarity). Interacts with AKT1 in the cytosol (PubMed:11598301).</text>
</comment>
<comment type="subunit">
    <text evidence="4">(Microbial infection) Interacts with V-AKT from AKT8 murine leukemia virus.</text>
</comment>
<comment type="subcellular location">
    <subcellularLocation>
        <location evidence="2">Cell membrane</location>
    </subcellularLocation>
    <subcellularLocation>
        <location evidence="2">Cell projection</location>
        <location evidence="2">Ruffle membrane</location>
    </subcellularLocation>
    <subcellularLocation>
        <location evidence="2">Cytoplasm</location>
    </subcellularLocation>
    <subcellularLocation>
        <location evidence="5">Mitochondrion</location>
    </subcellularLocation>
    <subcellularLocation>
        <location evidence="2">Mitochondrion inner membrane</location>
        <topology evidence="2">Peripheral membrane protein</topology>
    </subcellularLocation>
    <subcellularLocation>
        <location evidence="2">Mitochondrion intermembrane space</location>
    </subcellularLocation>
    <text evidence="2">Released from the mitochondria into the cytosol in response to apoptotic stimuli.</text>
</comment>
<comment type="PTM">
    <text evidence="2">Phosphorylated.</text>
</comment>
<comment type="disruption phenotype">
    <text evidence="5">No visible phenotype. Mice have abnormally elongated mitochondria, but mitochondrial function appears to be normal.</text>
</comment>
<comment type="similarity">
    <text evidence="6">Belongs to the THEM4/THEM5 thioesterase family.</text>
</comment>
<comment type="sequence caution" evidence="6">
    <conflict type="miscellaneous discrepancy">
        <sequence resource="EMBL-CDS" id="AAI34397"/>
    </conflict>
    <text>Contaminating sequence. Potential poly-A sequence.</text>
</comment>
<comment type="sequence caution" evidence="6">
    <conflict type="miscellaneous discrepancy">
        <sequence resource="EMBL-CDS" id="BAB29572"/>
    </conflict>
    <text>Contaminating sequence. Potential poly-A sequence.</text>
</comment>
<comment type="sequence caution" evidence="6">
    <conflict type="miscellaneous discrepancy">
        <sequence resource="EMBL-CDS" id="BAC29995"/>
    </conflict>
    <text>Contaminating sequence. Potential poly-A sequence.</text>
</comment>
<gene>
    <name type="primary">Them4</name>
    <name type="synonym">Ctmp</name>
</gene>
<evidence type="ECO:0000250" key="1"/>
<evidence type="ECO:0000250" key="2">
    <source>
        <dbReference type="UniProtKB" id="Q5T1C6"/>
    </source>
</evidence>
<evidence type="ECO:0000255" key="3"/>
<evidence type="ECO:0000269" key="4">
    <source>
    </source>
</evidence>
<evidence type="ECO:0000269" key="5">
    <source>
    </source>
</evidence>
<evidence type="ECO:0000305" key="6"/>
<evidence type="ECO:0007744" key="7">
    <source>
    </source>
</evidence>
<evidence type="ECO:0007744" key="8">
    <source>
    </source>
</evidence>
<sequence length="230" mass="26031">MLRNCAMRLRTLGATPARRPGAARRLFSSEKVIRKDYALPNPSWTKDLRLLFDQFMKKCEDGSWKRMPSHRQNPTRAIQEFQTLFVDSKFKKEEQMSKAQQFTRSFEEGLGFEYAMFYNKVEKRTVSLFQGGLHLQGVPGFVHGGAIATIIDVTTGTCAISEGVAMTANLNITYKKPIPLLSVVVVNSQLQKIEGRKLFVSCTIQSIDEKTLYTEATALFIKLDPEKPLT</sequence>
<name>THEM4_MOUSE</name>
<dbReference type="EC" id="3.1.2.2" evidence="2"/>
<dbReference type="EMBL" id="AK014834">
    <property type="protein sequence ID" value="BAB29572.1"/>
    <property type="status" value="ALT_SEQ"/>
    <property type="molecule type" value="mRNA"/>
</dbReference>
<dbReference type="EMBL" id="AK038420">
    <property type="protein sequence ID" value="BAC29995.1"/>
    <property type="status" value="ALT_SEQ"/>
    <property type="molecule type" value="mRNA"/>
</dbReference>
<dbReference type="EMBL" id="AK138397">
    <property type="protein sequence ID" value="BAE23642.1"/>
    <property type="molecule type" value="mRNA"/>
</dbReference>
<dbReference type="EMBL" id="BC022612">
    <property type="protein sequence ID" value="AAH22612.1"/>
    <property type="molecule type" value="mRNA"/>
</dbReference>
<dbReference type="EMBL" id="BC134396">
    <property type="protein sequence ID" value="AAI34397.1"/>
    <property type="status" value="ALT_SEQ"/>
    <property type="molecule type" value="mRNA"/>
</dbReference>
<dbReference type="CCDS" id="CCDS38533.1"/>
<dbReference type="RefSeq" id="NP_083707.1">
    <property type="nucleotide sequence ID" value="NM_029431.2"/>
</dbReference>
<dbReference type="SMR" id="Q3UUI3"/>
<dbReference type="BioGRID" id="217735">
    <property type="interactions" value="1"/>
</dbReference>
<dbReference type="FunCoup" id="Q3UUI3">
    <property type="interactions" value="1275"/>
</dbReference>
<dbReference type="STRING" id="10090.ENSMUSP00000062841"/>
<dbReference type="GlyGen" id="Q3UUI3">
    <property type="glycosylation" value="2 sites, 1 O-linked glycan (1 site)"/>
</dbReference>
<dbReference type="iPTMnet" id="Q3UUI3"/>
<dbReference type="PhosphoSitePlus" id="Q3UUI3"/>
<dbReference type="SwissPalm" id="Q3UUI3"/>
<dbReference type="jPOST" id="Q3UUI3"/>
<dbReference type="PaxDb" id="10090-ENSMUSP00000062841"/>
<dbReference type="PeptideAtlas" id="Q3UUI3"/>
<dbReference type="ProteomicsDB" id="259381"/>
<dbReference type="Antibodypedia" id="34077">
    <property type="antibodies" value="87 antibodies from 29 providers"/>
</dbReference>
<dbReference type="Ensembl" id="ENSMUST00000049822.10">
    <property type="protein sequence ID" value="ENSMUSP00000062841.8"/>
    <property type="gene ID" value="ENSMUSG00000028145.10"/>
</dbReference>
<dbReference type="GeneID" id="75778"/>
<dbReference type="KEGG" id="mmu:75778"/>
<dbReference type="UCSC" id="uc008qft.1">
    <property type="organism name" value="mouse"/>
</dbReference>
<dbReference type="AGR" id="MGI:1923028"/>
<dbReference type="CTD" id="117145"/>
<dbReference type="MGI" id="MGI:1923028">
    <property type="gene designation" value="Them4"/>
</dbReference>
<dbReference type="VEuPathDB" id="HostDB:ENSMUSG00000028145"/>
<dbReference type="eggNOG" id="KOG4781">
    <property type="taxonomic scope" value="Eukaryota"/>
</dbReference>
<dbReference type="GeneTree" id="ENSGT00940000160047"/>
<dbReference type="HOGENOM" id="CLU_072603_0_1_1"/>
<dbReference type="InParanoid" id="Q3UUI3"/>
<dbReference type="OMA" id="MFYNDVE"/>
<dbReference type="OrthoDB" id="506431at2759"/>
<dbReference type="PhylomeDB" id="Q3UUI3"/>
<dbReference type="TreeFam" id="TF332518"/>
<dbReference type="Reactome" id="R-MMU-1257604">
    <property type="pathway name" value="PIP3 activates AKT signaling"/>
</dbReference>
<dbReference type="Reactome" id="R-MMU-165158">
    <property type="pathway name" value="Activation of AKT2"/>
</dbReference>
<dbReference type="Reactome" id="R-MMU-199418">
    <property type="pathway name" value="Negative regulation of the PI3K/AKT network"/>
</dbReference>
<dbReference type="Reactome" id="R-MMU-389357">
    <property type="pathway name" value="CD28 dependent PI3K/Akt signaling"/>
</dbReference>
<dbReference type="Reactome" id="R-MMU-5218920">
    <property type="pathway name" value="VEGFR2 mediated vascular permeability"/>
</dbReference>
<dbReference type="Reactome" id="R-MMU-77289">
    <property type="pathway name" value="Mitochondrial Fatty Acid Beta-Oxidation"/>
</dbReference>
<dbReference type="BioGRID-ORCS" id="75778">
    <property type="hits" value="2 hits in 79 CRISPR screens"/>
</dbReference>
<dbReference type="ChiTaRS" id="Them4">
    <property type="organism name" value="mouse"/>
</dbReference>
<dbReference type="PRO" id="PR:Q3UUI3"/>
<dbReference type="Proteomes" id="UP000000589">
    <property type="component" value="Chromosome 3"/>
</dbReference>
<dbReference type="RNAct" id="Q3UUI3">
    <property type="molecule type" value="protein"/>
</dbReference>
<dbReference type="Bgee" id="ENSMUSG00000028145">
    <property type="expression patterns" value="Expressed in spermatocyte and 247 other cell types or tissues"/>
</dbReference>
<dbReference type="GO" id="GO:0005829">
    <property type="term" value="C:cytosol"/>
    <property type="evidence" value="ECO:0000250"/>
    <property type="project" value="UniProtKB"/>
</dbReference>
<dbReference type="GO" id="GO:0005743">
    <property type="term" value="C:mitochondrial inner membrane"/>
    <property type="evidence" value="ECO:0007669"/>
    <property type="project" value="UniProtKB-SubCell"/>
</dbReference>
<dbReference type="GO" id="GO:0005758">
    <property type="term" value="C:mitochondrial intermembrane space"/>
    <property type="evidence" value="ECO:0007669"/>
    <property type="project" value="UniProtKB-SubCell"/>
</dbReference>
<dbReference type="GO" id="GO:0005739">
    <property type="term" value="C:mitochondrion"/>
    <property type="evidence" value="ECO:0007005"/>
    <property type="project" value="MGI"/>
</dbReference>
<dbReference type="GO" id="GO:0032587">
    <property type="term" value="C:ruffle membrane"/>
    <property type="evidence" value="ECO:0007669"/>
    <property type="project" value="UniProtKB-SubCell"/>
</dbReference>
<dbReference type="GO" id="GO:0052816">
    <property type="term" value="F:long-chain fatty acyl-CoA hydrolase activity"/>
    <property type="evidence" value="ECO:0000250"/>
    <property type="project" value="UniProtKB"/>
</dbReference>
<dbReference type="GO" id="GO:0006631">
    <property type="term" value="P:fatty acid metabolic process"/>
    <property type="evidence" value="ECO:0000250"/>
    <property type="project" value="UniProtKB"/>
</dbReference>
<dbReference type="GO" id="GO:0051898">
    <property type="term" value="P:negative regulation of phosphatidylinositol 3-kinase/protein kinase B signal transduction"/>
    <property type="evidence" value="ECO:0000250"/>
    <property type="project" value="UniProtKB"/>
</dbReference>
<dbReference type="GO" id="GO:1902108">
    <property type="term" value="P:regulation of mitochondrial membrane permeability involved in apoptotic process"/>
    <property type="evidence" value="ECO:0000250"/>
    <property type="project" value="UniProtKB"/>
</dbReference>
<dbReference type="CDD" id="cd03443">
    <property type="entry name" value="PaaI_thioesterase"/>
    <property type="match status" value="1"/>
</dbReference>
<dbReference type="FunFam" id="3.10.129.10:FF:000046">
    <property type="entry name" value="Acyl-coenzyme A thioesterase THEM4"/>
    <property type="match status" value="1"/>
</dbReference>
<dbReference type="Gene3D" id="3.10.129.10">
    <property type="entry name" value="Hotdog Thioesterase"/>
    <property type="match status" value="1"/>
</dbReference>
<dbReference type="InterPro" id="IPR029069">
    <property type="entry name" value="HotDog_dom_sf"/>
</dbReference>
<dbReference type="InterPro" id="IPR052365">
    <property type="entry name" value="THEM4/THEM5_acyl-CoA_thioest"/>
</dbReference>
<dbReference type="InterPro" id="IPR006683">
    <property type="entry name" value="Thioestr_dom"/>
</dbReference>
<dbReference type="PANTHER" id="PTHR12418">
    <property type="entry name" value="ACYL-COENZYME A THIOESTERASE THEM4"/>
    <property type="match status" value="1"/>
</dbReference>
<dbReference type="PANTHER" id="PTHR12418:SF19">
    <property type="entry name" value="ACYL-COENZYME A THIOESTERASE THEM4"/>
    <property type="match status" value="1"/>
</dbReference>
<dbReference type="Pfam" id="PF03061">
    <property type="entry name" value="4HBT"/>
    <property type="match status" value="1"/>
</dbReference>
<dbReference type="SUPFAM" id="SSF54637">
    <property type="entry name" value="Thioesterase/thiol ester dehydrase-isomerase"/>
    <property type="match status" value="1"/>
</dbReference>
<feature type="transit peptide" description="Mitochondrion" evidence="3">
    <location>
        <begin position="1"/>
        <end position="27"/>
    </location>
</feature>
<feature type="chain" id="PRO_0000314180" description="Acyl-coenzyme A thioesterase THEM4">
    <location>
        <begin position="28"/>
        <end position="230"/>
    </location>
</feature>
<feature type="active site" description="Proton donor/acceptor" evidence="2">
    <location>
        <position position="152"/>
    </location>
</feature>
<feature type="binding site" evidence="1">
    <location>
        <position position="175"/>
    </location>
    <ligand>
        <name>substrate</name>
    </ligand>
</feature>
<feature type="binding site" evidence="1">
    <location>
        <begin position="196"/>
        <end position="197"/>
    </location>
    <ligand>
        <name>substrate</name>
    </ligand>
</feature>
<feature type="modified residue" description="Phosphoserine" evidence="2">
    <location>
        <position position="28"/>
    </location>
</feature>
<feature type="modified residue" description="Phosphoserine" evidence="2">
    <location>
        <position position="29"/>
    </location>
</feature>
<feature type="modified residue" description="N6-succinyllysine" evidence="8">
    <location>
        <position position="46"/>
    </location>
</feature>
<feature type="modified residue" description="N6-succinyllysine" evidence="8">
    <location>
        <position position="57"/>
    </location>
</feature>
<feature type="modified residue" description="N6-acetyllysine" evidence="7">
    <location>
        <position position="65"/>
    </location>
</feature>
<feature type="modified residue" description="N6-succinyllysine" evidence="8">
    <location>
        <position position="89"/>
    </location>
</feature>
<feature type="modified residue" description="N6-succinyllysine" evidence="8">
    <location>
        <position position="98"/>
    </location>
</feature>
<feature type="modified residue" description="N6-succinyllysine" evidence="8">
    <location>
        <position position="197"/>
    </location>
</feature>
<feature type="sequence conflict" description="In Ref. 2; AAH22612." evidence="6" ref="2">
    <original>R</original>
    <variation>C</variation>
    <location>
        <position position="34"/>
    </location>
</feature>
<feature type="sequence conflict" description="In Ref. 1; BAB29572." evidence="6" ref="1">
    <original>M</original>
    <variation>V</variation>
    <location>
        <position position="166"/>
    </location>
</feature>
<organism>
    <name type="scientific">Mus musculus</name>
    <name type="common">Mouse</name>
    <dbReference type="NCBI Taxonomy" id="10090"/>
    <lineage>
        <taxon>Eukaryota</taxon>
        <taxon>Metazoa</taxon>
        <taxon>Chordata</taxon>
        <taxon>Craniata</taxon>
        <taxon>Vertebrata</taxon>
        <taxon>Euteleostomi</taxon>
        <taxon>Mammalia</taxon>
        <taxon>Eutheria</taxon>
        <taxon>Euarchontoglires</taxon>
        <taxon>Glires</taxon>
        <taxon>Rodentia</taxon>
        <taxon>Myomorpha</taxon>
        <taxon>Muroidea</taxon>
        <taxon>Muridae</taxon>
        <taxon>Murinae</taxon>
        <taxon>Mus</taxon>
        <taxon>Mus</taxon>
    </lineage>
</organism>
<protein>
    <recommendedName>
        <fullName>Acyl-coenzyme A thioesterase THEM4</fullName>
        <shortName>Acyl-CoA thioesterase THEM4</shortName>
        <ecNumber evidence="2">3.1.2.2</ecNumber>
    </recommendedName>
    <alternativeName>
        <fullName>Carboxyl-terminal modulator protein</fullName>
    </alternativeName>
    <alternativeName>
        <fullName>Thioesterase superfamily member 4</fullName>
    </alternativeName>
</protein>
<reference key="1">
    <citation type="journal article" date="2005" name="Science">
        <title>The transcriptional landscape of the mammalian genome.</title>
        <authorList>
            <person name="Carninci P."/>
            <person name="Kasukawa T."/>
            <person name="Katayama S."/>
            <person name="Gough J."/>
            <person name="Frith M.C."/>
            <person name="Maeda N."/>
            <person name="Oyama R."/>
            <person name="Ravasi T."/>
            <person name="Lenhard B."/>
            <person name="Wells C."/>
            <person name="Kodzius R."/>
            <person name="Shimokawa K."/>
            <person name="Bajic V.B."/>
            <person name="Brenner S.E."/>
            <person name="Batalov S."/>
            <person name="Forrest A.R."/>
            <person name="Zavolan M."/>
            <person name="Davis M.J."/>
            <person name="Wilming L.G."/>
            <person name="Aidinis V."/>
            <person name="Allen J.E."/>
            <person name="Ambesi-Impiombato A."/>
            <person name="Apweiler R."/>
            <person name="Aturaliya R.N."/>
            <person name="Bailey T.L."/>
            <person name="Bansal M."/>
            <person name="Baxter L."/>
            <person name="Beisel K.W."/>
            <person name="Bersano T."/>
            <person name="Bono H."/>
            <person name="Chalk A.M."/>
            <person name="Chiu K.P."/>
            <person name="Choudhary V."/>
            <person name="Christoffels A."/>
            <person name="Clutterbuck D.R."/>
            <person name="Crowe M.L."/>
            <person name="Dalla E."/>
            <person name="Dalrymple B.P."/>
            <person name="de Bono B."/>
            <person name="Della Gatta G."/>
            <person name="di Bernardo D."/>
            <person name="Down T."/>
            <person name="Engstrom P."/>
            <person name="Fagiolini M."/>
            <person name="Faulkner G."/>
            <person name="Fletcher C.F."/>
            <person name="Fukushima T."/>
            <person name="Furuno M."/>
            <person name="Futaki S."/>
            <person name="Gariboldi M."/>
            <person name="Georgii-Hemming P."/>
            <person name="Gingeras T.R."/>
            <person name="Gojobori T."/>
            <person name="Green R.E."/>
            <person name="Gustincich S."/>
            <person name="Harbers M."/>
            <person name="Hayashi Y."/>
            <person name="Hensch T.K."/>
            <person name="Hirokawa N."/>
            <person name="Hill D."/>
            <person name="Huminiecki L."/>
            <person name="Iacono M."/>
            <person name="Ikeo K."/>
            <person name="Iwama A."/>
            <person name="Ishikawa T."/>
            <person name="Jakt M."/>
            <person name="Kanapin A."/>
            <person name="Katoh M."/>
            <person name="Kawasawa Y."/>
            <person name="Kelso J."/>
            <person name="Kitamura H."/>
            <person name="Kitano H."/>
            <person name="Kollias G."/>
            <person name="Krishnan S.P."/>
            <person name="Kruger A."/>
            <person name="Kummerfeld S.K."/>
            <person name="Kurochkin I.V."/>
            <person name="Lareau L.F."/>
            <person name="Lazarevic D."/>
            <person name="Lipovich L."/>
            <person name="Liu J."/>
            <person name="Liuni S."/>
            <person name="McWilliam S."/>
            <person name="Madan Babu M."/>
            <person name="Madera M."/>
            <person name="Marchionni L."/>
            <person name="Matsuda H."/>
            <person name="Matsuzawa S."/>
            <person name="Miki H."/>
            <person name="Mignone F."/>
            <person name="Miyake S."/>
            <person name="Morris K."/>
            <person name="Mottagui-Tabar S."/>
            <person name="Mulder N."/>
            <person name="Nakano N."/>
            <person name="Nakauchi H."/>
            <person name="Ng P."/>
            <person name="Nilsson R."/>
            <person name="Nishiguchi S."/>
            <person name="Nishikawa S."/>
            <person name="Nori F."/>
            <person name="Ohara O."/>
            <person name="Okazaki Y."/>
            <person name="Orlando V."/>
            <person name="Pang K.C."/>
            <person name="Pavan W.J."/>
            <person name="Pavesi G."/>
            <person name="Pesole G."/>
            <person name="Petrovsky N."/>
            <person name="Piazza S."/>
            <person name="Reed J."/>
            <person name="Reid J.F."/>
            <person name="Ring B.Z."/>
            <person name="Ringwald M."/>
            <person name="Rost B."/>
            <person name="Ruan Y."/>
            <person name="Salzberg S.L."/>
            <person name="Sandelin A."/>
            <person name="Schneider C."/>
            <person name="Schoenbach C."/>
            <person name="Sekiguchi K."/>
            <person name="Semple C.A."/>
            <person name="Seno S."/>
            <person name="Sessa L."/>
            <person name="Sheng Y."/>
            <person name="Shibata Y."/>
            <person name="Shimada H."/>
            <person name="Shimada K."/>
            <person name="Silva D."/>
            <person name="Sinclair B."/>
            <person name="Sperling S."/>
            <person name="Stupka E."/>
            <person name="Sugiura K."/>
            <person name="Sultana R."/>
            <person name="Takenaka Y."/>
            <person name="Taki K."/>
            <person name="Tammoja K."/>
            <person name="Tan S.L."/>
            <person name="Tang S."/>
            <person name="Taylor M.S."/>
            <person name="Tegner J."/>
            <person name="Teichmann S.A."/>
            <person name="Ueda H.R."/>
            <person name="van Nimwegen E."/>
            <person name="Verardo R."/>
            <person name="Wei C.L."/>
            <person name="Yagi K."/>
            <person name="Yamanishi H."/>
            <person name="Zabarovsky E."/>
            <person name="Zhu S."/>
            <person name="Zimmer A."/>
            <person name="Hide W."/>
            <person name="Bult C."/>
            <person name="Grimmond S.M."/>
            <person name="Teasdale R.D."/>
            <person name="Liu E.T."/>
            <person name="Brusic V."/>
            <person name="Quackenbush J."/>
            <person name="Wahlestedt C."/>
            <person name="Mattick J.S."/>
            <person name="Hume D.A."/>
            <person name="Kai C."/>
            <person name="Sasaki D."/>
            <person name="Tomaru Y."/>
            <person name="Fukuda S."/>
            <person name="Kanamori-Katayama M."/>
            <person name="Suzuki M."/>
            <person name="Aoki J."/>
            <person name="Arakawa T."/>
            <person name="Iida J."/>
            <person name="Imamura K."/>
            <person name="Itoh M."/>
            <person name="Kato T."/>
            <person name="Kawaji H."/>
            <person name="Kawagashira N."/>
            <person name="Kawashima T."/>
            <person name="Kojima M."/>
            <person name="Kondo S."/>
            <person name="Konno H."/>
            <person name="Nakano K."/>
            <person name="Ninomiya N."/>
            <person name="Nishio T."/>
            <person name="Okada M."/>
            <person name="Plessy C."/>
            <person name="Shibata K."/>
            <person name="Shiraki T."/>
            <person name="Suzuki S."/>
            <person name="Tagami M."/>
            <person name="Waki K."/>
            <person name="Watahiki A."/>
            <person name="Okamura-Oho Y."/>
            <person name="Suzuki H."/>
            <person name="Kawai J."/>
            <person name="Hayashizaki Y."/>
        </authorList>
    </citation>
    <scope>NUCLEOTIDE SEQUENCE [LARGE SCALE MRNA]</scope>
    <source>
        <strain>C57BL/6J</strain>
        <tissue>Hypothalamus</tissue>
        <tissue>Testis</tissue>
    </source>
</reference>
<reference key="2">
    <citation type="journal article" date="2004" name="Genome Res.">
        <title>The status, quality, and expansion of the NIH full-length cDNA project: the Mammalian Gene Collection (MGC).</title>
        <authorList>
            <consortium name="The MGC Project Team"/>
        </authorList>
    </citation>
    <scope>NUCLEOTIDE SEQUENCE [LARGE SCALE MRNA]</scope>
    <source>
        <strain>FVB/N</strain>
        <tissue>Salivary gland</tissue>
    </source>
</reference>
<reference key="3">
    <citation type="journal article" date="2001" name="Science">
        <title>Carboxyl-terminal modulator protein (CTMP), a negative regulator of PKB/Akt and v-Akt at the plasma membrane.</title>
        <authorList>
            <person name="Maira S.-M."/>
            <person name="Galetic I."/>
            <person name="Brazil D.P."/>
            <person name="Kaech S."/>
            <person name="Ingley E."/>
            <person name="Thelen M."/>
            <person name="Hemmings B.A."/>
        </authorList>
    </citation>
    <scope>INTERACTION WITH AKT8 MURINE LEUKEMIA VIRUS V-AKT (MICROBIAL INFECTION) AND AKTI</scope>
</reference>
<reference key="4">
    <citation type="journal article" date="2009" name="PLoS ONE">
        <title>The carboxy-terminal modulator protein (CTMP) regulates mitochondrial dynamics.</title>
        <authorList>
            <person name="Parcellier A."/>
            <person name="Tintignac L.A."/>
            <person name="Zhuravleva E."/>
            <person name="Dummler B."/>
            <person name="Brazil D.P."/>
            <person name="Hynx D."/>
            <person name="Cron P."/>
            <person name="Schenk S."/>
            <person name="Olivieri V."/>
            <person name="Hemmings B.A."/>
        </authorList>
    </citation>
    <scope>DISRUPTION PHENOTYPE</scope>
    <scope>FUNCTION</scope>
    <scope>SUBCELLULAR LOCATION</scope>
</reference>
<reference key="5">
    <citation type="journal article" date="2010" name="Cell">
        <title>A tissue-specific atlas of mouse protein phosphorylation and expression.</title>
        <authorList>
            <person name="Huttlin E.L."/>
            <person name="Jedrychowski M.P."/>
            <person name="Elias J.E."/>
            <person name="Goswami T."/>
            <person name="Rad R."/>
            <person name="Beausoleil S.A."/>
            <person name="Villen J."/>
            <person name="Haas W."/>
            <person name="Sowa M.E."/>
            <person name="Gygi S.P."/>
        </authorList>
    </citation>
    <scope>IDENTIFICATION BY MASS SPECTROMETRY [LARGE SCALE ANALYSIS]</scope>
    <source>
        <tissue>Brain</tissue>
        <tissue>Brown adipose tissue</tissue>
        <tissue>Heart</tissue>
        <tissue>Kidney</tissue>
        <tissue>Liver</tissue>
        <tissue>Testis</tissue>
    </source>
</reference>
<reference key="6">
    <citation type="journal article" date="2013" name="Mol. Cell">
        <title>SIRT5-mediated lysine desuccinylation impacts diverse metabolic pathways.</title>
        <authorList>
            <person name="Park J."/>
            <person name="Chen Y."/>
            <person name="Tishkoff D.X."/>
            <person name="Peng C."/>
            <person name="Tan M."/>
            <person name="Dai L."/>
            <person name="Xie Z."/>
            <person name="Zhang Y."/>
            <person name="Zwaans B.M."/>
            <person name="Skinner M.E."/>
            <person name="Lombard D.B."/>
            <person name="Zhao Y."/>
        </authorList>
    </citation>
    <scope>SUCCINYLATION [LARGE SCALE ANALYSIS] AT LYS-46; LYS-57; LYS-89; LYS-98 AND LYS-197</scope>
    <scope>IDENTIFICATION BY MASS SPECTROMETRY [LARGE SCALE ANALYSIS]</scope>
    <source>
        <tissue>Liver</tissue>
    </source>
</reference>
<reference key="7">
    <citation type="journal article" date="2013" name="Proc. Natl. Acad. Sci. U.S.A.">
        <title>Label-free quantitative proteomics of the lysine acetylome in mitochondria identifies substrates of SIRT3 in metabolic pathways.</title>
        <authorList>
            <person name="Rardin M.J."/>
            <person name="Newman J.C."/>
            <person name="Held J.M."/>
            <person name="Cusack M.P."/>
            <person name="Sorensen D.J."/>
            <person name="Li B."/>
            <person name="Schilling B."/>
            <person name="Mooney S.D."/>
            <person name="Kahn C.R."/>
            <person name="Verdin E."/>
            <person name="Gibson B.W."/>
        </authorList>
    </citation>
    <scope>ACETYLATION [LARGE SCALE ANALYSIS] AT LYS-65</scope>
    <scope>IDENTIFICATION BY MASS SPECTROMETRY [LARGE SCALE ANALYSIS]</scope>
    <source>
        <tissue>Liver</tissue>
    </source>
</reference>
<keyword id="KW-0007">Acetylation</keyword>
<keyword id="KW-0053">Apoptosis</keyword>
<keyword id="KW-1003">Cell membrane</keyword>
<keyword id="KW-0966">Cell projection</keyword>
<keyword id="KW-0963">Cytoplasm</keyword>
<keyword id="KW-0276">Fatty acid metabolism</keyword>
<keyword id="KW-0945">Host-virus interaction</keyword>
<keyword id="KW-0378">Hydrolase</keyword>
<keyword id="KW-0443">Lipid metabolism</keyword>
<keyword id="KW-0472">Membrane</keyword>
<keyword id="KW-0496">Mitochondrion</keyword>
<keyword id="KW-0999">Mitochondrion inner membrane</keyword>
<keyword id="KW-0597">Phosphoprotein</keyword>
<keyword id="KW-1185">Reference proteome</keyword>
<keyword id="KW-0809">Transit peptide</keyword>
<proteinExistence type="evidence at protein level"/>
<accession>Q3UUI3</accession>
<accession>A3KPD5</accession>
<accession>Q8BYS9</accession>
<accession>Q8R234</accession>
<accession>Q9D5Y3</accession>